<accession>B8ZLD9</accession>
<name>RS18_STRPJ</name>
<gene>
    <name evidence="1" type="primary">rpsR</name>
    <name type="ordered locus">SPN23F15020</name>
</gene>
<protein>
    <recommendedName>
        <fullName evidence="1">Small ribosomal subunit protein bS18</fullName>
    </recommendedName>
    <alternativeName>
        <fullName evidence="2">30S ribosomal protein S18</fullName>
    </alternativeName>
</protein>
<evidence type="ECO:0000255" key="1">
    <source>
        <dbReference type="HAMAP-Rule" id="MF_00270"/>
    </source>
</evidence>
<evidence type="ECO:0000305" key="2"/>
<dbReference type="EMBL" id="FM211187">
    <property type="protein sequence ID" value="CAR69284.1"/>
    <property type="molecule type" value="Genomic_DNA"/>
</dbReference>
<dbReference type="RefSeq" id="WP_000068664.1">
    <property type="nucleotide sequence ID" value="NC_011900.1"/>
</dbReference>
<dbReference type="SMR" id="B8ZLD9"/>
<dbReference type="GeneID" id="93963800"/>
<dbReference type="KEGG" id="sne:SPN23F15020"/>
<dbReference type="HOGENOM" id="CLU_148710_2_2_9"/>
<dbReference type="GO" id="GO:0022627">
    <property type="term" value="C:cytosolic small ribosomal subunit"/>
    <property type="evidence" value="ECO:0007669"/>
    <property type="project" value="TreeGrafter"/>
</dbReference>
<dbReference type="GO" id="GO:0070181">
    <property type="term" value="F:small ribosomal subunit rRNA binding"/>
    <property type="evidence" value="ECO:0007669"/>
    <property type="project" value="TreeGrafter"/>
</dbReference>
<dbReference type="GO" id="GO:0003735">
    <property type="term" value="F:structural constituent of ribosome"/>
    <property type="evidence" value="ECO:0007669"/>
    <property type="project" value="InterPro"/>
</dbReference>
<dbReference type="GO" id="GO:0006412">
    <property type="term" value="P:translation"/>
    <property type="evidence" value="ECO:0007669"/>
    <property type="project" value="UniProtKB-UniRule"/>
</dbReference>
<dbReference type="FunFam" id="4.10.640.10:FF:000003">
    <property type="entry name" value="30S ribosomal protein S18"/>
    <property type="match status" value="1"/>
</dbReference>
<dbReference type="Gene3D" id="4.10.640.10">
    <property type="entry name" value="Ribosomal protein S18"/>
    <property type="match status" value="1"/>
</dbReference>
<dbReference type="HAMAP" id="MF_00270">
    <property type="entry name" value="Ribosomal_bS18"/>
    <property type="match status" value="1"/>
</dbReference>
<dbReference type="InterPro" id="IPR001648">
    <property type="entry name" value="Ribosomal_bS18"/>
</dbReference>
<dbReference type="InterPro" id="IPR018275">
    <property type="entry name" value="Ribosomal_bS18_CS"/>
</dbReference>
<dbReference type="InterPro" id="IPR036870">
    <property type="entry name" value="Ribosomal_bS18_sf"/>
</dbReference>
<dbReference type="NCBIfam" id="TIGR00165">
    <property type="entry name" value="S18"/>
    <property type="match status" value="1"/>
</dbReference>
<dbReference type="PANTHER" id="PTHR13479">
    <property type="entry name" value="30S RIBOSOMAL PROTEIN S18"/>
    <property type="match status" value="1"/>
</dbReference>
<dbReference type="PANTHER" id="PTHR13479:SF40">
    <property type="entry name" value="SMALL RIBOSOMAL SUBUNIT PROTEIN BS18M"/>
    <property type="match status" value="1"/>
</dbReference>
<dbReference type="Pfam" id="PF01084">
    <property type="entry name" value="Ribosomal_S18"/>
    <property type="match status" value="1"/>
</dbReference>
<dbReference type="PRINTS" id="PR00974">
    <property type="entry name" value="RIBOSOMALS18"/>
</dbReference>
<dbReference type="SUPFAM" id="SSF46911">
    <property type="entry name" value="Ribosomal protein S18"/>
    <property type="match status" value="1"/>
</dbReference>
<dbReference type="PROSITE" id="PS00057">
    <property type="entry name" value="RIBOSOMAL_S18"/>
    <property type="match status" value="1"/>
</dbReference>
<sequence length="79" mass="9204">MAQQRRGGFKRRKKVDYIAANKIEYVDYKDTELLSRFVSERGKILPRRVTGTSAKNQRKVTTAIKRARVMALMPFVNED</sequence>
<proteinExistence type="inferred from homology"/>
<keyword id="KW-0687">Ribonucleoprotein</keyword>
<keyword id="KW-0689">Ribosomal protein</keyword>
<keyword id="KW-0694">RNA-binding</keyword>
<keyword id="KW-0699">rRNA-binding</keyword>
<organism>
    <name type="scientific">Streptococcus pneumoniae (strain ATCC 700669 / Spain 23F-1)</name>
    <dbReference type="NCBI Taxonomy" id="561276"/>
    <lineage>
        <taxon>Bacteria</taxon>
        <taxon>Bacillati</taxon>
        <taxon>Bacillota</taxon>
        <taxon>Bacilli</taxon>
        <taxon>Lactobacillales</taxon>
        <taxon>Streptococcaceae</taxon>
        <taxon>Streptococcus</taxon>
    </lineage>
</organism>
<comment type="function">
    <text evidence="1">Binds as a heterodimer with protein bS6 to the central domain of the 16S rRNA, where it helps stabilize the platform of the 30S subunit.</text>
</comment>
<comment type="subunit">
    <text evidence="1">Part of the 30S ribosomal subunit. Forms a tight heterodimer with protein bS6.</text>
</comment>
<comment type="similarity">
    <text evidence="1">Belongs to the bacterial ribosomal protein bS18 family.</text>
</comment>
<reference key="1">
    <citation type="journal article" date="2009" name="J. Bacteriol.">
        <title>Role of conjugative elements in the evolution of the multidrug-resistant pandemic clone Streptococcus pneumoniae Spain23F ST81.</title>
        <authorList>
            <person name="Croucher N.J."/>
            <person name="Walker D."/>
            <person name="Romero P."/>
            <person name="Lennard N."/>
            <person name="Paterson G.K."/>
            <person name="Bason N.C."/>
            <person name="Mitchell A.M."/>
            <person name="Quail M.A."/>
            <person name="Andrew P.W."/>
            <person name="Parkhill J."/>
            <person name="Bentley S.D."/>
            <person name="Mitchell T.J."/>
        </authorList>
    </citation>
    <scope>NUCLEOTIDE SEQUENCE [LARGE SCALE GENOMIC DNA]</scope>
    <source>
        <strain>ATCC 700669 / Spain 23F-1</strain>
    </source>
</reference>
<feature type="chain" id="PRO_1000196532" description="Small ribosomal subunit protein bS18">
    <location>
        <begin position="1"/>
        <end position="79"/>
    </location>
</feature>